<gene>
    <name type="primary">MADS56</name>
    <name type="ORF">OsI_033300</name>
</gene>
<reference key="1">
    <citation type="submission" date="1999-04" db="EMBL/GenBank/DDBJ databases">
        <title>Oryza sativa MADS-box protein FDRMADS8.</title>
        <authorList>
            <person name="Jia H.-W."/>
            <person name="Cong B."/>
            <person name="Shao J."/>
            <person name="Sun C.-R."/>
        </authorList>
    </citation>
    <scope>NUCLEOTIDE SEQUENCE [MRNA]</scope>
    <source>
        <strain>cv. Guang-Lu-Ai No.4</strain>
    </source>
</reference>
<reference key="2">
    <citation type="journal article" date="2005" name="PLoS Biol.">
        <title>The genomes of Oryza sativa: a history of duplications.</title>
        <authorList>
            <person name="Yu J."/>
            <person name="Wang J."/>
            <person name="Lin W."/>
            <person name="Li S."/>
            <person name="Li H."/>
            <person name="Zhou J."/>
            <person name="Ni P."/>
            <person name="Dong W."/>
            <person name="Hu S."/>
            <person name="Zeng C."/>
            <person name="Zhang J."/>
            <person name="Zhang Y."/>
            <person name="Li R."/>
            <person name="Xu Z."/>
            <person name="Li S."/>
            <person name="Li X."/>
            <person name="Zheng H."/>
            <person name="Cong L."/>
            <person name="Lin L."/>
            <person name="Yin J."/>
            <person name="Geng J."/>
            <person name="Li G."/>
            <person name="Shi J."/>
            <person name="Liu J."/>
            <person name="Lv H."/>
            <person name="Li J."/>
            <person name="Wang J."/>
            <person name="Deng Y."/>
            <person name="Ran L."/>
            <person name="Shi X."/>
            <person name="Wang X."/>
            <person name="Wu Q."/>
            <person name="Li C."/>
            <person name="Ren X."/>
            <person name="Wang J."/>
            <person name="Wang X."/>
            <person name="Li D."/>
            <person name="Liu D."/>
            <person name="Zhang X."/>
            <person name="Ji Z."/>
            <person name="Zhao W."/>
            <person name="Sun Y."/>
            <person name="Zhang Z."/>
            <person name="Bao J."/>
            <person name="Han Y."/>
            <person name="Dong L."/>
            <person name="Ji J."/>
            <person name="Chen P."/>
            <person name="Wu S."/>
            <person name="Liu J."/>
            <person name="Xiao Y."/>
            <person name="Bu D."/>
            <person name="Tan J."/>
            <person name="Yang L."/>
            <person name="Ye C."/>
            <person name="Zhang J."/>
            <person name="Xu J."/>
            <person name="Zhou Y."/>
            <person name="Yu Y."/>
            <person name="Zhang B."/>
            <person name="Zhuang S."/>
            <person name="Wei H."/>
            <person name="Liu B."/>
            <person name="Lei M."/>
            <person name="Yu H."/>
            <person name="Li Y."/>
            <person name="Xu H."/>
            <person name="Wei S."/>
            <person name="He X."/>
            <person name="Fang L."/>
            <person name="Zhang Z."/>
            <person name="Zhang Y."/>
            <person name="Huang X."/>
            <person name="Su Z."/>
            <person name="Tong W."/>
            <person name="Li J."/>
            <person name="Tong Z."/>
            <person name="Li S."/>
            <person name="Ye J."/>
            <person name="Wang L."/>
            <person name="Fang L."/>
            <person name="Lei T."/>
            <person name="Chen C.-S."/>
            <person name="Chen H.-C."/>
            <person name="Xu Z."/>
            <person name="Li H."/>
            <person name="Huang H."/>
            <person name="Zhang F."/>
            <person name="Xu H."/>
            <person name="Li N."/>
            <person name="Zhao C."/>
            <person name="Li S."/>
            <person name="Dong L."/>
            <person name="Huang Y."/>
            <person name="Li L."/>
            <person name="Xi Y."/>
            <person name="Qi Q."/>
            <person name="Li W."/>
            <person name="Zhang B."/>
            <person name="Hu W."/>
            <person name="Zhang Y."/>
            <person name="Tian X."/>
            <person name="Jiao Y."/>
            <person name="Liang X."/>
            <person name="Jin J."/>
            <person name="Gao L."/>
            <person name="Zheng W."/>
            <person name="Hao B."/>
            <person name="Liu S.-M."/>
            <person name="Wang W."/>
            <person name="Yuan L."/>
            <person name="Cao M."/>
            <person name="McDermott J."/>
            <person name="Samudrala R."/>
            <person name="Wang J."/>
            <person name="Wong G.K.-S."/>
            <person name="Yang H."/>
        </authorList>
    </citation>
    <scope>NUCLEOTIDE SEQUENCE [LARGE SCALE GENOMIC DNA]</scope>
    <source>
        <strain>cv. 93-11</strain>
    </source>
</reference>
<sequence length="233" mass="26275">MVRGRTELKRIENPTSRQVTFSKRRNGLLKKAFELSVLCDAEVALIVFSPRGRLYEFASAPSLQKTIDRYKAYTKDHVNNKTIQQDIQQVKDDTLGLAKKLEALDESRRKILGENLEGCSIEELRGLEMKLEKSLHNIRLKKTELLERQIAKLKEKERTLLKDNENLRGKHRNLEAAALVANHMTTTTAPAAWPRDVPMTSSTAGAADAMDVETDLYIGLPGTERSSNRSETG</sequence>
<evidence type="ECO:0000255" key="1">
    <source>
        <dbReference type="PROSITE-ProRule" id="PRU00251"/>
    </source>
</evidence>
<evidence type="ECO:0000255" key="2">
    <source>
        <dbReference type="PROSITE-ProRule" id="PRU00629"/>
    </source>
</evidence>
<evidence type="ECO:0000305" key="3"/>
<organism>
    <name type="scientific">Oryza sativa subsp. indica</name>
    <name type="common">Rice</name>
    <dbReference type="NCBI Taxonomy" id="39946"/>
    <lineage>
        <taxon>Eukaryota</taxon>
        <taxon>Viridiplantae</taxon>
        <taxon>Streptophyta</taxon>
        <taxon>Embryophyta</taxon>
        <taxon>Tracheophyta</taxon>
        <taxon>Spermatophyta</taxon>
        <taxon>Magnoliopsida</taxon>
        <taxon>Liliopsida</taxon>
        <taxon>Poales</taxon>
        <taxon>Poaceae</taxon>
        <taxon>BOP clade</taxon>
        <taxon>Oryzoideae</taxon>
        <taxon>Oryzeae</taxon>
        <taxon>Oryzinae</taxon>
        <taxon>Oryza</taxon>
        <taxon>Oryza sativa</taxon>
    </lineage>
</organism>
<comment type="function">
    <text>Probable transcription factor.</text>
</comment>
<comment type="subcellular location">
    <subcellularLocation>
        <location evidence="3">Nucleus</location>
    </subcellularLocation>
</comment>
<proteinExistence type="evidence at transcript level"/>
<feature type="chain" id="PRO_0000296352" description="MADS-box transcription factor 56">
    <location>
        <begin position="1"/>
        <end position="233"/>
    </location>
</feature>
<feature type="domain" description="MADS-box" evidence="1">
    <location>
        <begin position="1"/>
        <end position="61"/>
    </location>
</feature>
<feature type="domain" description="K-box" evidence="2">
    <location>
        <begin position="87"/>
        <end position="177"/>
    </location>
</feature>
<keyword id="KW-0238">DNA-binding</keyword>
<keyword id="KW-0539">Nucleus</keyword>
<keyword id="KW-1185">Reference proteome</keyword>
<keyword id="KW-0804">Transcription</keyword>
<keyword id="KW-0805">Transcription regulation</keyword>
<name>MAD56_ORYSI</name>
<accession>A2Z9Q7</accession>
<accession>Q0IW33</accession>
<accession>Q109B7</accession>
<accession>Q6VAM0</accession>
<accession>Q7XCN2</accession>
<accession>Q8W2X6</accession>
<accession>Q9XH55</accession>
<dbReference type="EMBL" id="AF141965">
    <property type="protein sequence ID" value="AAD38369.1"/>
    <property type="molecule type" value="mRNA"/>
</dbReference>
<dbReference type="EMBL" id="CM000135">
    <property type="status" value="NOT_ANNOTATED_CDS"/>
    <property type="molecule type" value="Genomic_DNA"/>
</dbReference>
<dbReference type="SMR" id="A2Z9Q7"/>
<dbReference type="STRING" id="39946.A2Z9Q7"/>
<dbReference type="EnsemblPlants" id="BGIOSGA033356-TA">
    <property type="protein sequence ID" value="BGIOSGA033356-PA"/>
    <property type="gene ID" value="BGIOSGA033356"/>
</dbReference>
<dbReference type="EnsemblPlants" id="OsMH63_10G018220_01">
    <property type="protein sequence ID" value="OsMH63_10G018220_01"/>
    <property type="gene ID" value="OsMH63_10G018220"/>
</dbReference>
<dbReference type="EnsemblPlants" id="OsZS97_10G018290_01">
    <property type="protein sequence ID" value="OsZS97_10G018290_01"/>
    <property type="gene ID" value="OsZS97_10G018290"/>
</dbReference>
<dbReference type="Gramene" id="BGIOSGA033356-TA">
    <property type="protein sequence ID" value="BGIOSGA033356-PA"/>
    <property type="gene ID" value="BGIOSGA033356"/>
</dbReference>
<dbReference type="Gramene" id="OsMH63_10G018220_01">
    <property type="protein sequence ID" value="OsMH63_10G018220_01"/>
    <property type="gene ID" value="OsMH63_10G018220"/>
</dbReference>
<dbReference type="Gramene" id="OsZS97_10G018290_01">
    <property type="protein sequence ID" value="OsZS97_10G018290_01"/>
    <property type="gene ID" value="OsZS97_10G018290"/>
</dbReference>
<dbReference type="HOGENOM" id="CLU_053053_0_4_1"/>
<dbReference type="OMA" id="KAYTKDH"/>
<dbReference type="Proteomes" id="UP000007015">
    <property type="component" value="Chromosome 10"/>
</dbReference>
<dbReference type="ExpressionAtlas" id="A2Z9Q7">
    <property type="expression patterns" value="differential"/>
</dbReference>
<dbReference type="GO" id="GO:0005634">
    <property type="term" value="C:nucleus"/>
    <property type="evidence" value="ECO:0007669"/>
    <property type="project" value="UniProtKB-SubCell"/>
</dbReference>
<dbReference type="GO" id="GO:0003700">
    <property type="term" value="F:DNA-binding transcription factor activity"/>
    <property type="evidence" value="ECO:0007669"/>
    <property type="project" value="InterPro"/>
</dbReference>
<dbReference type="GO" id="GO:0046983">
    <property type="term" value="F:protein dimerization activity"/>
    <property type="evidence" value="ECO:0007669"/>
    <property type="project" value="InterPro"/>
</dbReference>
<dbReference type="GO" id="GO:0000977">
    <property type="term" value="F:RNA polymerase II transcription regulatory region sequence-specific DNA binding"/>
    <property type="evidence" value="ECO:0007669"/>
    <property type="project" value="InterPro"/>
</dbReference>
<dbReference type="GO" id="GO:0045944">
    <property type="term" value="P:positive regulation of transcription by RNA polymerase II"/>
    <property type="evidence" value="ECO:0007669"/>
    <property type="project" value="InterPro"/>
</dbReference>
<dbReference type="CDD" id="cd00265">
    <property type="entry name" value="MADS_MEF2_like"/>
    <property type="match status" value="1"/>
</dbReference>
<dbReference type="FunFam" id="3.40.1810.10:FF:000012">
    <property type="entry name" value="MADS-box protein SOC1"/>
    <property type="match status" value="1"/>
</dbReference>
<dbReference type="Gene3D" id="3.40.1810.10">
    <property type="entry name" value="Transcription factor, MADS-box"/>
    <property type="match status" value="1"/>
</dbReference>
<dbReference type="InterPro" id="IPR050142">
    <property type="entry name" value="MADS-box/MEF2_TF"/>
</dbReference>
<dbReference type="InterPro" id="IPR033896">
    <property type="entry name" value="MEF2-like_N"/>
</dbReference>
<dbReference type="InterPro" id="IPR002487">
    <property type="entry name" value="TF_Kbox"/>
</dbReference>
<dbReference type="InterPro" id="IPR002100">
    <property type="entry name" value="TF_MADSbox"/>
</dbReference>
<dbReference type="InterPro" id="IPR036879">
    <property type="entry name" value="TF_MADSbox_sf"/>
</dbReference>
<dbReference type="PANTHER" id="PTHR48019">
    <property type="entry name" value="SERUM RESPONSE FACTOR HOMOLOG"/>
    <property type="match status" value="1"/>
</dbReference>
<dbReference type="Pfam" id="PF01486">
    <property type="entry name" value="K-box"/>
    <property type="match status" value="1"/>
</dbReference>
<dbReference type="Pfam" id="PF00319">
    <property type="entry name" value="SRF-TF"/>
    <property type="match status" value="1"/>
</dbReference>
<dbReference type="PRINTS" id="PR00404">
    <property type="entry name" value="MADSDOMAIN"/>
</dbReference>
<dbReference type="SMART" id="SM00432">
    <property type="entry name" value="MADS"/>
    <property type="match status" value="1"/>
</dbReference>
<dbReference type="SUPFAM" id="SSF55455">
    <property type="entry name" value="SRF-like"/>
    <property type="match status" value="1"/>
</dbReference>
<dbReference type="PROSITE" id="PS51297">
    <property type="entry name" value="K_BOX"/>
    <property type="match status" value="1"/>
</dbReference>
<dbReference type="PROSITE" id="PS00350">
    <property type="entry name" value="MADS_BOX_1"/>
    <property type="match status" value="1"/>
</dbReference>
<dbReference type="PROSITE" id="PS50066">
    <property type="entry name" value="MADS_BOX_2"/>
    <property type="match status" value="1"/>
</dbReference>
<protein>
    <recommendedName>
        <fullName>MADS-box transcription factor 56</fullName>
    </recommendedName>
    <alternativeName>
        <fullName>FDRMADS8</fullName>
    </alternativeName>
    <alternativeName>
        <fullName>OsMADS56</fullName>
    </alternativeName>
    <alternativeName>
        <fullName>RMADS214</fullName>
    </alternativeName>
</protein>